<evidence type="ECO:0000250" key="1"/>
<evidence type="ECO:0000305" key="2"/>
<accession>P06769</accession>
<protein>
    <recommendedName>
        <fullName>Nitrogenase molybdenum-iron protein alpha chain</fullName>
        <ecNumber>1.18.6.1</ecNumber>
    </recommendedName>
    <alternativeName>
        <fullName>Dinitrogenase</fullName>
    </alternativeName>
    <alternativeName>
        <fullName>Nitrogenase component I</fullName>
    </alternativeName>
</protein>
<proteinExistence type="inferred from homology"/>
<dbReference type="EC" id="1.18.6.1"/>
<dbReference type="EMBL" id="M10203">
    <property type="protein sequence ID" value="AAA26308.1"/>
    <property type="molecule type" value="Genomic_DNA"/>
</dbReference>
<dbReference type="SMR" id="P06769"/>
<dbReference type="GO" id="GO:0016612">
    <property type="term" value="C:molybdenum-iron nitrogenase complex"/>
    <property type="evidence" value="ECO:0007669"/>
    <property type="project" value="InterPro"/>
</dbReference>
<dbReference type="GO" id="GO:0005524">
    <property type="term" value="F:ATP binding"/>
    <property type="evidence" value="ECO:0007669"/>
    <property type="project" value="UniProtKB-KW"/>
</dbReference>
<dbReference type="GO" id="GO:0051536">
    <property type="term" value="F:iron-sulfur cluster binding"/>
    <property type="evidence" value="ECO:0007669"/>
    <property type="project" value="UniProtKB-KW"/>
</dbReference>
<dbReference type="GO" id="GO:0046872">
    <property type="term" value="F:metal ion binding"/>
    <property type="evidence" value="ECO:0007669"/>
    <property type="project" value="UniProtKB-KW"/>
</dbReference>
<dbReference type="GO" id="GO:0016163">
    <property type="term" value="F:nitrogenase activity"/>
    <property type="evidence" value="ECO:0007669"/>
    <property type="project" value="UniProtKB-EC"/>
</dbReference>
<dbReference type="GO" id="GO:0009399">
    <property type="term" value="P:nitrogen fixation"/>
    <property type="evidence" value="ECO:0007669"/>
    <property type="project" value="UniProtKB-KW"/>
</dbReference>
<dbReference type="CDD" id="cd01976">
    <property type="entry name" value="Nitrogenase_MoFe_alpha"/>
    <property type="match status" value="1"/>
</dbReference>
<dbReference type="Gene3D" id="3.40.50.1980">
    <property type="entry name" value="Nitrogenase molybdenum iron protein domain"/>
    <property type="match status" value="3"/>
</dbReference>
<dbReference type="InterPro" id="IPR000510">
    <property type="entry name" value="Nase/OxRdtase_comp1"/>
</dbReference>
<dbReference type="InterPro" id="IPR010143">
    <property type="entry name" value="Nase_comp1_asu"/>
</dbReference>
<dbReference type="InterPro" id="IPR000318">
    <property type="entry name" value="Nase_comp1_CS"/>
</dbReference>
<dbReference type="InterPro" id="IPR005972">
    <property type="entry name" value="Nase_Mo-Fe_asu"/>
</dbReference>
<dbReference type="NCBIfam" id="TIGR01862">
    <property type="entry name" value="N2-ase-Ialpha"/>
    <property type="match status" value="1"/>
</dbReference>
<dbReference type="NCBIfam" id="TIGR01282">
    <property type="entry name" value="nifD"/>
    <property type="match status" value="1"/>
</dbReference>
<dbReference type="PANTHER" id="PTHR43457">
    <property type="entry name" value="NITROGENASE MOLYBDENUM-IRON PROTEIN ALPHA CHAIN"/>
    <property type="match status" value="1"/>
</dbReference>
<dbReference type="PANTHER" id="PTHR43457:SF1">
    <property type="entry name" value="NITROGENASE MOLYBDENUM-IRON PROTEIN ALPHA CHAIN"/>
    <property type="match status" value="1"/>
</dbReference>
<dbReference type="Pfam" id="PF00148">
    <property type="entry name" value="Oxidored_nitro"/>
    <property type="match status" value="1"/>
</dbReference>
<dbReference type="SUPFAM" id="SSF53807">
    <property type="entry name" value="Helical backbone' metal receptor"/>
    <property type="match status" value="1"/>
</dbReference>
<dbReference type="PROSITE" id="PS00699">
    <property type="entry name" value="NITROGENASE_1_1"/>
    <property type="match status" value="1"/>
</dbReference>
<dbReference type="PROSITE" id="PS00090">
    <property type="entry name" value="NITROGENASE_1_2"/>
    <property type="match status" value="1"/>
</dbReference>
<reference key="1">
    <citation type="journal article" date="1984" name="Proc. Natl. Acad. Sci. U.S.A.">
        <title>Structural genes of dinitrogenase and dinitrogenase reductase are transcribed from two separate promoters in the broad host range cowpea Rhizobium strain IRc78.</title>
        <authorList>
            <person name="Yun A.C."/>
            <person name="Szalay A.A."/>
        </authorList>
    </citation>
    <scope>NUCLEOTIDE SEQUENCE [GENOMIC DNA]</scope>
</reference>
<organism>
    <name type="scientific">Rhizobium sp. cowpea (strain IRc78)</name>
    <dbReference type="NCBI Taxonomy" id="400"/>
    <lineage>
        <taxon>Bacteria</taxon>
        <taxon>Pseudomonadati</taxon>
        <taxon>Pseudomonadota</taxon>
        <taxon>Alphaproteobacteria</taxon>
        <taxon>Hyphomicrobiales</taxon>
        <taxon>Rhizobiaceae</taxon>
        <taxon>Rhizobium/Agrobacterium group</taxon>
        <taxon>Rhizobium</taxon>
    </lineage>
</organism>
<gene>
    <name type="primary">nifD</name>
</gene>
<name>NIFD_RHICP</name>
<keyword id="KW-0067">ATP-binding</keyword>
<keyword id="KW-0408">Iron</keyword>
<keyword id="KW-0411">Iron-sulfur</keyword>
<keyword id="KW-0479">Metal-binding</keyword>
<keyword id="KW-0500">Molybdenum</keyword>
<keyword id="KW-0535">Nitrogen fixation</keyword>
<keyword id="KW-0547">Nucleotide-binding</keyword>
<keyword id="KW-0560">Oxidoreductase</keyword>
<sequence length="500" mass="56136">MSLASTQSIAEIRARNKELIQEVLKVYPEKTAKRRAKHLNVHQAGKSDCGVKSNIKSIPGVMTIRGCAYAGSKGVVWGPIKDMVHISHGPVGCGQYSWGSRRNYYVGTTGIDSFVTLQFTFDFREKDIVFGGDKKLVKILDEIQELFPLNNGITIQSECPIGLIGDDIEAVSRAKSKEYGGKTIVPVRCEGFRGVSQSLGHHIANDAVRDWIFDQVEADGKPKVEPTPYDVAIIGDYNIGGDAWSSRILLEEMGLRVIAQWSGDGSLAELEANVEGKLNILHCYRSMNYISRHMEEKFGIPWCEYNFFGPSKIAESLRRIAGYFDDKIKEGAERVIEKYQPLVNAVIAKYRPRLEGKTVMLYVGGLRSRHVIGAYEDLGMEVIGTGYEFGHNDDYQRTAQHYVKDGTLIHDDVNGYEFERFVEKLQPDLVGSGIKEKYVFQKMGGPFRQMHSWDYSGPYHGYDGFAIFARDMDMAINSPVWKKTKAPWKEASRAKLLAAE</sequence>
<comment type="function">
    <text>This molybdenum-iron protein is part of the nitrogenase complex that catalyzes the key enzymatic reactions in nitrogen fixation.</text>
</comment>
<comment type="catalytic activity">
    <reaction>
        <text>N2 + 8 reduced [2Fe-2S]-[ferredoxin] + 16 ATP + 16 H2O = H2 + 8 oxidized [2Fe-2S]-[ferredoxin] + 2 NH4(+) + 16 ADP + 16 phosphate + 6 H(+)</text>
        <dbReference type="Rhea" id="RHEA:21448"/>
        <dbReference type="Rhea" id="RHEA-COMP:10000"/>
        <dbReference type="Rhea" id="RHEA-COMP:10001"/>
        <dbReference type="ChEBI" id="CHEBI:15377"/>
        <dbReference type="ChEBI" id="CHEBI:15378"/>
        <dbReference type="ChEBI" id="CHEBI:17997"/>
        <dbReference type="ChEBI" id="CHEBI:18276"/>
        <dbReference type="ChEBI" id="CHEBI:28938"/>
        <dbReference type="ChEBI" id="CHEBI:30616"/>
        <dbReference type="ChEBI" id="CHEBI:33737"/>
        <dbReference type="ChEBI" id="CHEBI:33738"/>
        <dbReference type="ChEBI" id="CHEBI:43474"/>
        <dbReference type="ChEBI" id="CHEBI:456216"/>
        <dbReference type="EC" id="1.18.6.1"/>
    </reaction>
</comment>
<comment type="cofactor">
    <cofactor evidence="1">
        <name>[8Fe-7S] cluster</name>
        <dbReference type="ChEBI" id="CHEBI:21143"/>
    </cofactor>
    <text evidence="1">Binds 1 [8Fe-7S] cluster per heterodimer.</text>
</comment>
<comment type="cofactor">
    <cofactor evidence="1">
        <name>[7Fe-Mo-9S-C-homocitryl] cluster</name>
        <dbReference type="ChEBI" id="CHEBI:30409"/>
    </cofactor>
    <text evidence="1">Binds 1 [7Fe-Mo-9S-C-homocitryl] cluster per subunit.</text>
</comment>
<comment type="subunit">
    <text>Tetramer of two alpha and two beta chains. Forms complex with the iron protein (nitrogenase component 2).</text>
</comment>
<comment type="similarity">
    <text evidence="2">Belongs to the NifD/NifK/NifE/NifN family.</text>
</comment>
<feature type="chain" id="PRO_0000153078" description="Nitrogenase molybdenum-iron protein alpha chain">
    <location>
        <begin position="1"/>
        <end position="500"/>
    </location>
</feature>
<feature type="binding site" evidence="1">
    <location>
        <position position="67"/>
    </location>
    <ligand>
        <name>[8Fe-7S] cluster</name>
        <dbReference type="ChEBI" id="CHEBI:21143"/>
        <note>ligand shared with beta chain</note>
    </ligand>
</feature>
<feature type="binding site" evidence="1">
    <location>
        <position position="93"/>
    </location>
    <ligand>
        <name>[8Fe-7S] cluster</name>
        <dbReference type="ChEBI" id="CHEBI:21143"/>
        <note>ligand shared with beta chain</note>
    </ligand>
</feature>
<feature type="binding site" evidence="1">
    <location>
        <position position="159"/>
    </location>
    <ligand>
        <name>[8Fe-7S] cluster</name>
        <dbReference type="ChEBI" id="CHEBI:21143"/>
        <note>ligand shared with beta chain</note>
    </ligand>
</feature>
<feature type="binding site" evidence="1">
    <location>
        <position position="283"/>
    </location>
    <ligand>
        <name>[7Fe-Mo-9S-C-homocitryl] cluster</name>
        <dbReference type="ChEBI" id="CHEBI:30409"/>
    </ligand>
</feature>
<feature type="binding site" evidence="1">
    <location>
        <position position="451"/>
    </location>
    <ligand>
        <name>[7Fe-Mo-9S-C-homocitryl] cluster</name>
        <dbReference type="ChEBI" id="CHEBI:30409"/>
    </ligand>
</feature>